<accession>P21060</accession>
<organismHost>
    <name type="scientific">Homo sapiens</name>
    <name type="common">Human</name>
    <dbReference type="NCBI Taxonomy" id="9606"/>
</organismHost>
<sequence length="263" mass="29896">MEIFPVFGISKISNFIANNDCRYYIDTEHQKIISDEINRQMDETVLLTNILSVEVVNDNEMYHLIPHRLSTIILCISSVGGCVISIDNDVNGKNILTFPIDHAVIISPLSKCVVVSKGPTTILVVKADIPSKRLVTSFTNDILYVNNLSLINYLPLSVFIIRRVTDYLDRHICDQIFANNKWYSIITIDNKQFPIPSNCIGMSSAKYINSSIEQDTLIHVCNLEHPFDLVYKKMQSYNSVPIKEQILYGRIDNINMSISISVY</sequence>
<name>PG165_VACCC</name>
<proteinExistence type="evidence at transcript level"/>
<dbReference type="EMBL" id="M35027">
    <property type="protein sequence ID" value="AAA48165.1"/>
    <property type="molecule type" value="Genomic_DNA"/>
</dbReference>
<dbReference type="PIR" id="C42521">
    <property type="entry name" value="C42521"/>
</dbReference>
<dbReference type="Proteomes" id="UP000008269">
    <property type="component" value="Segment"/>
</dbReference>
<dbReference type="InterPro" id="IPR009641">
    <property type="entry name" value="Vaccinia_virus_A37"/>
</dbReference>
<dbReference type="Pfam" id="PF06822">
    <property type="entry name" value="DUF1235"/>
    <property type="match status" value="1"/>
</dbReference>
<protein>
    <recommendedName>
        <fullName>Protein OPG165</fullName>
    </recommendedName>
</protein>
<comment type="induction">
    <text>Expressed in the early phase of the viral replicative cycle.</text>
</comment>
<comment type="similarity">
    <text evidence="1">Belongs to the orthopoxvirus OPG165 family.</text>
</comment>
<reference key="1">
    <citation type="journal article" date="1990" name="Virology">
        <title>The complete DNA sequence of vaccinia virus.</title>
        <authorList>
            <person name="Goebel S.J."/>
            <person name="Johnson G.P."/>
            <person name="Perkus M.E."/>
            <person name="Davis S.W."/>
            <person name="Winslow J.P."/>
            <person name="Paoletti E."/>
        </authorList>
    </citation>
    <scope>NUCLEOTIDE SEQUENCE [LARGE SCALE GENOMIC DNA]</scope>
</reference>
<reference key="2">
    <citation type="journal article" date="1990" name="Virology">
        <title>Appendix to 'The complete DNA sequence of vaccinia virus'.</title>
        <authorList>
            <person name="Goebel S.J."/>
            <person name="Johnson G.P."/>
            <person name="Perkus M.E."/>
            <person name="Davis S.W."/>
            <person name="Winslow J.P."/>
            <person name="Paoletti E."/>
        </authorList>
    </citation>
    <scope>NUCLEOTIDE SEQUENCE [LARGE SCALE GENOMIC DNA]</scope>
</reference>
<gene>
    <name type="primary">OPG165</name>
    <name type="ORF">A37R</name>
</gene>
<evidence type="ECO:0000305" key="1"/>
<feature type="chain" id="PRO_0000099322" description="Protein OPG165">
    <location>
        <begin position="1"/>
        <end position="263"/>
    </location>
</feature>
<keyword id="KW-0244">Early protein</keyword>
<keyword id="KW-1185">Reference proteome</keyword>
<organism>
    <name type="scientific">Vaccinia virus (strain Copenhagen)</name>
    <name type="common">VACV</name>
    <dbReference type="NCBI Taxonomy" id="10249"/>
    <lineage>
        <taxon>Viruses</taxon>
        <taxon>Varidnaviria</taxon>
        <taxon>Bamfordvirae</taxon>
        <taxon>Nucleocytoviricota</taxon>
        <taxon>Pokkesviricetes</taxon>
        <taxon>Chitovirales</taxon>
        <taxon>Poxviridae</taxon>
        <taxon>Chordopoxvirinae</taxon>
        <taxon>Orthopoxvirus</taxon>
        <taxon>Vaccinia virus</taxon>
    </lineage>
</organism>